<name>Y5389_ARATH</name>
<keyword id="KW-0067">ATP-binding</keyword>
<keyword id="KW-0325">Glycoprotein</keyword>
<keyword id="KW-0418">Kinase</keyword>
<keyword id="KW-0472">Membrane</keyword>
<keyword id="KW-0547">Nucleotide-binding</keyword>
<keyword id="KW-1185">Reference proteome</keyword>
<keyword id="KW-0723">Serine/threonine-protein kinase</keyword>
<keyword id="KW-0732">Signal</keyword>
<keyword id="KW-0808">Transferase</keyword>
<keyword id="KW-0812">Transmembrane</keyword>
<keyword id="KW-1133">Transmembrane helix</keyword>
<sequence length="880" mass="97953">MICHVLVIFTILVSAVVDATASYEPTDVFLINCGDTSNNMDYSGRNWTTENPKFMSSNAVDDASFTSSASYQESGIPQVPYLKARIFRYDFTYSFPVSPGWKFLRLYFYPTRYGSDFDAVKSFFSVNVNRFTLLHNFSVKASIPESSSLIKEFIVPVNQTLDLTFTPSPNSLAFVNGIEIISMPDRFYSKGGFDDVVRNVGRDVDFEIDNSTAFETVYRVNVGGKVVGDVGDSGMFRRWLSDEGFLLGINSGAIPNITGVKINYTDKTPAYVAPEDVYTTCRLMGNKDSPELNLNFNLTWLFEVDAGFAYIVRLHFCETQPEVNKTGDRVFSIFFGYQLAMREMDVFRLSGGFRLPMYLDFKVLVDADGTSQRPSLRVDLTPYKEDYPTYYDAILSGVEILKLSNSDGNLAGLNPIPQLSPPPQSITPLKGKGKSSHVLPIIIAVVGSAVALAFFVLVVVLVVMKRKKKSNESSVDTTNKPSTNSSWGPLLHGTGSTNTKSASSLPSDLCRRFSIYEIKSATNDFEEKLIIGVGGFGSVYKGRIDGGATLVAVKRLEITSNQGAKEFDTELEMLSKLRHVHLVSLIGYCDDDNEMVLVYEYMPHGTLKDHLFRRDKASDPPLSWKRRLEICIGAARGLQYLHTGAKYTIIHRDIKTTNILLDENFVAKVSDFGLSRVGPTSASQTHVSTVVKGTFGYLDPEYYRRQILTEKSDVYSFGVVLLEVLCCRPIRMQSVPPEQADLIRWVKSNFNKRTVDQIIDSDLTADITSTSMEKFCEIAIRCVQDRGMERPPMNDVVWALEFALQLHETAKKKNDNVESLDLMPSGEVGTTTDGEDDLFSRTTGHVGKSTTTDDSVLVVGDERSGSSWGVFSEINEPKAR</sequence>
<reference key="1">
    <citation type="journal article" date="1998" name="DNA Res.">
        <title>Structural analysis of Arabidopsis thaliana chromosome 5. VIII. Sequence features of the regions of 1,081,958 bp covered by seventeen physically assigned P1 and TAC clones.</title>
        <authorList>
            <person name="Asamizu E."/>
            <person name="Sato S."/>
            <person name="Kaneko T."/>
            <person name="Nakamura Y."/>
            <person name="Kotani H."/>
            <person name="Miyajima N."/>
            <person name="Tabata S."/>
        </authorList>
    </citation>
    <scope>NUCLEOTIDE SEQUENCE [LARGE SCALE GENOMIC DNA]</scope>
    <source>
        <strain>cv. Columbia</strain>
    </source>
</reference>
<reference key="2">
    <citation type="journal article" date="1998" name="DNA Res.">
        <title>Structural analysis of Arabidopsis thaliana chromosome 5. IV. Sequence features of the regions of 1,456,315 bp covered by nineteen physically assigned P1 and TAC clones.</title>
        <authorList>
            <person name="Sato S."/>
            <person name="Kaneko T."/>
            <person name="Kotani H."/>
            <person name="Nakamura Y."/>
            <person name="Asamizu E."/>
            <person name="Miyajima N."/>
            <person name="Tabata S."/>
        </authorList>
    </citation>
    <scope>NUCLEOTIDE SEQUENCE [LARGE SCALE GENOMIC DNA]</scope>
    <source>
        <strain>cv. Columbia</strain>
    </source>
</reference>
<reference key="3">
    <citation type="journal article" date="2017" name="Plant J.">
        <title>Araport11: a complete reannotation of the Arabidopsis thaliana reference genome.</title>
        <authorList>
            <person name="Cheng C.Y."/>
            <person name="Krishnakumar V."/>
            <person name="Chan A.P."/>
            <person name="Thibaud-Nissen F."/>
            <person name="Schobel S."/>
            <person name="Town C.D."/>
        </authorList>
    </citation>
    <scope>GENOME REANNOTATION</scope>
    <source>
        <strain>cv. Columbia</strain>
    </source>
</reference>
<reference key="4">
    <citation type="journal article" date="2003" name="Science">
        <title>Empirical analysis of transcriptional activity in the Arabidopsis genome.</title>
        <authorList>
            <person name="Yamada K."/>
            <person name="Lim J."/>
            <person name="Dale J.M."/>
            <person name="Chen H."/>
            <person name="Shinn P."/>
            <person name="Palm C.J."/>
            <person name="Southwick A.M."/>
            <person name="Wu H.C."/>
            <person name="Kim C.J."/>
            <person name="Nguyen M."/>
            <person name="Pham P.K."/>
            <person name="Cheuk R.F."/>
            <person name="Karlin-Newmann G."/>
            <person name="Liu S.X."/>
            <person name="Lam B."/>
            <person name="Sakano H."/>
            <person name="Wu T."/>
            <person name="Yu G."/>
            <person name="Miranda M."/>
            <person name="Quach H.L."/>
            <person name="Tripp M."/>
            <person name="Chang C.H."/>
            <person name="Lee J.M."/>
            <person name="Toriumi M.J."/>
            <person name="Chan M.M."/>
            <person name="Tang C.C."/>
            <person name="Onodera C.S."/>
            <person name="Deng J.M."/>
            <person name="Akiyama K."/>
            <person name="Ansari Y."/>
            <person name="Arakawa T."/>
            <person name="Banh J."/>
            <person name="Banno F."/>
            <person name="Bowser L."/>
            <person name="Brooks S.Y."/>
            <person name="Carninci P."/>
            <person name="Chao Q."/>
            <person name="Choy N."/>
            <person name="Enju A."/>
            <person name="Goldsmith A.D."/>
            <person name="Gurjal M."/>
            <person name="Hansen N.F."/>
            <person name="Hayashizaki Y."/>
            <person name="Johnson-Hopson C."/>
            <person name="Hsuan V.W."/>
            <person name="Iida K."/>
            <person name="Karnes M."/>
            <person name="Khan S."/>
            <person name="Koesema E."/>
            <person name="Ishida J."/>
            <person name="Jiang P.X."/>
            <person name="Jones T."/>
            <person name="Kawai J."/>
            <person name="Kamiya A."/>
            <person name="Meyers C."/>
            <person name="Nakajima M."/>
            <person name="Narusaka M."/>
            <person name="Seki M."/>
            <person name="Sakurai T."/>
            <person name="Satou M."/>
            <person name="Tamse R."/>
            <person name="Vaysberg M."/>
            <person name="Wallender E.K."/>
            <person name="Wong C."/>
            <person name="Yamamura Y."/>
            <person name="Yuan S."/>
            <person name="Shinozaki K."/>
            <person name="Davis R.W."/>
            <person name="Theologis A."/>
            <person name="Ecker J.R."/>
        </authorList>
    </citation>
    <scope>NUCLEOTIDE SEQUENCE [LARGE SCALE MRNA]</scope>
    <source>
        <strain>cv. Columbia</strain>
    </source>
</reference>
<reference key="5">
    <citation type="journal article" date="2009" name="Mol. Plant">
        <title>Diverse transcriptional programs associated with environmental stress and hormones in the Arabidopsis receptor-like kinase gene family.</title>
        <authorList>
            <person name="Chae L."/>
            <person name="Sudat S."/>
            <person name="Dudoit S."/>
            <person name="Zhu T."/>
            <person name="Luan S."/>
        </authorList>
    </citation>
    <scope>GENE FAMILY</scope>
</reference>
<proteinExistence type="evidence at transcript level"/>
<protein>
    <recommendedName>
        <fullName>Probable receptor-like protein kinase At5g38990</fullName>
        <ecNumber>2.7.11.-</ecNumber>
    </recommendedName>
</protein>
<evidence type="ECO:0000255" key="1"/>
<evidence type="ECO:0000255" key="2">
    <source>
        <dbReference type="PROSITE-ProRule" id="PRU00159"/>
    </source>
</evidence>
<evidence type="ECO:0000255" key="3">
    <source>
        <dbReference type="PROSITE-ProRule" id="PRU10027"/>
    </source>
</evidence>
<evidence type="ECO:0000256" key="4">
    <source>
        <dbReference type="SAM" id="MobiDB-lite"/>
    </source>
</evidence>
<evidence type="ECO:0000305" key="5"/>
<gene>
    <name type="ordered locus">At5g38990</name>
    <name type="ORF">K15E6.170</name>
</gene>
<accession>Q9FID9</accession>
<accession>Q8RWQ0</accession>
<comment type="subcellular location">
    <subcellularLocation>
        <location evidence="5">Membrane</location>
        <topology evidence="5">Single-pass type I membrane protein</topology>
    </subcellularLocation>
</comment>
<comment type="similarity">
    <text evidence="2">Belongs to the protein kinase superfamily. Ser/Thr protein kinase family.</text>
</comment>
<feature type="signal peptide" evidence="1">
    <location>
        <begin position="1"/>
        <end position="21"/>
    </location>
</feature>
<feature type="chain" id="PRO_0000386560" description="Probable receptor-like protein kinase At5g38990">
    <location>
        <begin position="22"/>
        <end position="880"/>
    </location>
</feature>
<feature type="topological domain" description="Extracellular" evidence="1">
    <location>
        <begin position="22"/>
        <end position="440"/>
    </location>
</feature>
<feature type="transmembrane region" description="Helical" evidence="1">
    <location>
        <begin position="441"/>
        <end position="461"/>
    </location>
</feature>
<feature type="topological domain" description="Cytoplasmic" evidence="1">
    <location>
        <begin position="462"/>
        <end position="880"/>
    </location>
</feature>
<feature type="domain" description="Protein kinase" evidence="2">
    <location>
        <begin position="525"/>
        <end position="810"/>
    </location>
</feature>
<feature type="region of interest" description="Disordered" evidence="4">
    <location>
        <begin position="471"/>
        <end position="505"/>
    </location>
</feature>
<feature type="region of interest" description="Disordered" evidence="4">
    <location>
        <begin position="820"/>
        <end position="846"/>
    </location>
</feature>
<feature type="compositionally biased region" description="Polar residues" evidence="4">
    <location>
        <begin position="472"/>
        <end position="487"/>
    </location>
</feature>
<feature type="compositionally biased region" description="Polar residues" evidence="4">
    <location>
        <begin position="494"/>
        <end position="505"/>
    </location>
</feature>
<feature type="active site" description="Proton acceptor" evidence="2 3">
    <location>
        <position position="653"/>
    </location>
</feature>
<feature type="binding site" evidence="2">
    <location>
        <begin position="531"/>
        <end position="539"/>
    </location>
    <ligand>
        <name>ATP</name>
        <dbReference type="ChEBI" id="CHEBI:30616"/>
    </ligand>
</feature>
<feature type="binding site" evidence="2">
    <location>
        <position position="554"/>
    </location>
    <ligand>
        <name>ATP</name>
        <dbReference type="ChEBI" id="CHEBI:30616"/>
    </ligand>
</feature>
<feature type="glycosylation site" description="N-linked (GlcNAc...) asparagine" evidence="1">
    <location>
        <position position="46"/>
    </location>
</feature>
<feature type="glycosylation site" description="N-linked (GlcNAc...) asparagine" evidence="1">
    <location>
        <position position="136"/>
    </location>
</feature>
<feature type="glycosylation site" description="N-linked (GlcNAc...) asparagine" evidence="1">
    <location>
        <position position="158"/>
    </location>
</feature>
<feature type="glycosylation site" description="N-linked (GlcNAc...) asparagine" evidence="1">
    <location>
        <position position="210"/>
    </location>
</feature>
<feature type="glycosylation site" description="N-linked (GlcNAc...) asparagine" evidence="1">
    <location>
        <position position="256"/>
    </location>
</feature>
<feature type="glycosylation site" description="N-linked (GlcNAc...) asparagine" evidence="1">
    <location>
        <position position="263"/>
    </location>
</feature>
<feature type="glycosylation site" description="N-linked (GlcNAc...) asparagine" evidence="1">
    <location>
        <position position="297"/>
    </location>
</feature>
<feature type="glycosylation site" description="N-linked (GlcNAc...) asparagine" evidence="1">
    <location>
        <position position="324"/>
    </location>
</feature>
<feature type="sequence conflict" description="In Ref. 4; AAM10331/AAN18200." evidence="5" ref="4">
    <original>M</original>
    <variation>L</variation>
    <location>
        <position position="602"/>
    </location>
</feature>
<organism>
    <name type="scientific">Arabidopsis thaliana</name>
    <name type="common">Mouse-ear cress</name>
    <dbReference type="NCBI Taxonomy" id="3702"/>
    <lineage>
        <taxon>Eukaryota</taxon>
        <taxon>Viridiplantae</taxon>
        <taxon>Streptophyta</taxon>
        <taxon>Embryophyta</taxon>
        <taxon>Tracheophyta</taxon>
        <taxon>Spermatophyta</taxon>
        <taxon>Magnoliopsida</taxon>
        <taxon>eudicotyledons</taxon>
        <taxon>Gunneridae</taxon>
        <taxon>Pentapetalae</taxon>
        <taxon>rosids</taxon>
        <taxon>malvids</taxon>
        <taxon>Brassicales</taxon>
        <taxon>Brassicaceae</taxon>
        <taxon>Camelineae</taxon>
        <taxon>Arabidopsis</taxon>
    </lineage>
</organism>
<dbReference type="EC" id="2.7.11.-"/>
<dbReference type="EMBL" id="AB016892">
    <property type="protein sequence ID" value="BAB10823.1"/>
    <property type="molecule type" value="Genomic_DNA"/>
</dbReference>
<dbReference type="EMBL" id="AB009048">
    <property type="protein sequence ID" value="BAB10823.1"/>
    <property type="status" value="JOINED"/>
    <property type="molecule type" value="Genomic_DNA"/>
</dbReference>
<dbReference type="EMBL" id="CP002688">
    <property type="protein sequence ID" value="AED94384.1"/>
    <property type="molecule type" value="Genomic_DNA"/>
</dbReference>
<dbReference type="EMBL" id="AY091785">
    <property type="protein sequence ID" value="AAM10331.1"/>
    <property type="molecule type" value="mRNA"/>
</dbReference>
<dbReference type="EMBL" id="BT000634">
    <property type="protein sequence ID" value="AAN18200.1"/>
    <property type="molecule type" value="mRNA"/>
</dbReference>
<dbReference type="RefSeq" id="NP_198715.1">
    <property type="nucleotide sequence ID" value="NM_123261.4"/>
</dbReference>
<dbReference type="SMR" id="Q9FID9"/>
<dbReference type="BioGRID" id="19142">
    <property type="interactions" value="15"/>
</dbReference>
<dbReference type="FunCoup" id="Q9FID9">
    <property type="interactions" value="38"/>
</dbReference>
<dbReference type="IntAct" id="Q9FID9">
    <property type="interactions" value="15"/>
</dbReference>
<dbReference type="STRING" id="3702.Q9FID9"/>
<dbReference type="GlyGen" id="Q9FID9">
    <property type="glycosylation" value="9 sites"/>
</dbReference>
<dbReference type="iPTMnet" id="Q9FID9"/>
<dbReference type="PaxDb" id="3702-AT5G38990.1"/>
<dbReference type="ProteomicsDB" id="243109"/>
<dbReference type="EnsemblPlants" id="AT5G38990.1">
    <property type="protein sequence ID" value="AT5G38990.1"/>
    <property type="gene ID" value="AT5G38990"/>
</dbReference>
<dbReference type="GeneID" id="833891"/>
<dbReference type="Gramene" id="AT5G38990.1">
    <property type="protein sequence ID" value="AT5G38990.1"/>
    <property type="gene ID" value="AT5G38990"/>
</dbReference>
<dbReference type="KEGG" id="ath:AT5G38990"/>
<dbReference type="Araport" id="AT5G38990"/>
<dbReference type="TAIR" id="AT5G38990">
    <property type="gene designation" value="MDS1"/>
</dbReference>
<dbReference type="eggNOG" id="KOG1187">
    <property type="taxonomic scope" value="Eukaryota"/>
</dbReference>
<dbReference type="HOGENOM" id="CLU_000288_42_5_1"/>
<dbReference type="InParanoid" id="Q9FID9"/>
<dbReference type="OMA" id="PWTHLPL"/>
<dbReference type="OrthoDB" id="1720310at2759"/>
<dbReference type="PhylomeDB" id="Q9FID9"/>
<dbReference type="PRO" id="PR:Q9FID9"/>
<dbReference type="Proteomes" id="UP000006548">
    <property type="component" value="Chromosome 5"/>
</dbReference>
<dbReference type="ExpressionAtlas" id="Q9FID9">
    <property type="expression patterns" value="baseline and differential"/>
</dbReference>
<dbReference type="GO" id="GO:0016020">
    <property type="term" value="C:membrane"/>
    <property type="evidence" value="ECO:0007669"/>
    <property type="project" value="UniProtKB-SubCell"/>
</dbReference>
<dbReference type="GO" id="GO:0009536">
    <property type="term" value="C:plastid"/>
    <property type="evidence" value="ECO:0007005"/>
    <property type="project" value="TAIR"/>
</dbReference>
<dbReference type="GO" id="GO:0005524">
    <property type="term" value="F:ATP binding"/>
    <property type="evidence" value="ECO:0007669"/>
    <property type="project" value="UniProtKB-KW"/>
</dbReference>
<dbReference type="GO" id="GO:0004674">
    <property type="term" value="F:protein serine/threonine kinase activity"/>
    <property type="evidence" value="ECO:0007669"/>
    <property type="project" value="UniProtKB-KW"/>
</dbReference>
<dbReference type="GO" id="GO:0004714">
    <property type="term" value="F:transmembrane receptor protein tyrosine kinase activity"/>
    <property type="evidence" value="ECO:0007669"/>
    <property type="project" value="InterPro"/>
</dbReference>
<dbReference type="GO" id="GO:0010038">
    <property type="term" value="P:response to metal ion"/>
    <property type="evidence" value="ECO:0000316"/>
    <property type="project" value="TAIR"/>
</dbReference>
<dbReference type="CDD" id="cd14066">
    <property type="entry name" value="STKc_IRAK"/>
    <property type="match status" value="1"/>
</dbReference>
<dbReference type="FunFam" id="2.60.120.430:FF:000003">
    <property type="entry name" value="FERONIA receptor-like kinase"/>
    <property type="match status" value="1"/>
</dbReference>
<dbReference type="FunFam" id="2.60.120.430:FF:000007">
    <property type="entry name" value="FERONIA receptor-like kinase"/>
    <property type="match status" value="1"/>
</dbReference>
<dbReference type="FunFam" id="1.10.510.10:FF:000252">
    <property type="entry name" value="Receptor-like protein kinase FERONIA"/>
    <property type="match status" value="1"/>
</dbReference>
<dbReference type="FunFam" id="3.30.200.20:FF:000645">
    <property type="entry name" value="Receptor-like protein kinase FERONIA"/>
    <property type="match status" value="1"/>
</dbReference>
<dbReference type="Gene3D" id="2.60.120.430">
    <property type="entry name" value="Galactose-binding lectin"/>
    <property type="match status" value="2"/>
</dbReference>
<dbReference type="Gene3D" id="3.30.200.20">
    <property type="entry name" value="Phosphorylase Kinase, domain 1"/>
    <property type="match status" value="1"/>
</dbReference>
<dbReference type="Gene3D" id="1.10.510.10">
    <property type="entry name" value="Transferase(Phosphotransferase) domain 1"/>
    <property type="match status" value="1"/>
</dbReference>
<dbReference type="InterPro" id="IPR045272">
    <property type="entry name" value="ANXUR1/2-like"/>
</dbReference>
<dbReference type="InterPro" id="IPR011009">
    <property type="entry name" value="Kinase-like_dom_sf"/>
</dbReference>
<dbReference type="InterPro" id="IPR024788">
    <property type="entry name" value="Malectin-like_Carb-bd_dom"/>
</dbReference>
<dbReference type="InterPro" id="IPR000719">
    <property type="entry name" value="Prot_kinase_dom"/>
</dbReference>
<dbReference type="InterPro" id="IPR017441">
    <property type="entry name" value="Protein_kinase_ATP_BS"/>
</dbReference>
<dbReference type="InterPro" id="IPR001245">
    <property type="entry name" value="Ser-Thr/Tyr_kinase_cat_dom"/>
</dbReference>
<dbReference type="InterPro" id="IPR008271">
    <property type="entry name" value="Ser/Thr_kinase_AS"/>
</dbReference>
<dbReference type="PANTHER" id="PTHR34590">
    <property type="entry name" value="OS03G0124300 PROTEIN-RELATED"/>
    <property type="match status" value="1"/>
</dbReference>
<dbReference type="PANTHER" id="PTHR34590:SF5">
    <property type="entry name" value="OS04G0586500 PROTEIN"/>
    <property type="match status" value="1"/>
</dbReference>
<dbReference type="Pfam" id="PF12819">
    <property type="entry name" value="Malectin_like"/>
    <property type="match status" value="1"/>
</dbReference>
<dbReference type="Pfam" id="PF07714">
    <property type="entry name" value="PK_Tyr_Ser-Thr"/>
    <property type="match status" value="1"/>
</dbReference>
<dbReference type="SMART" id="SM00220">
    <property type="entry name" value="S_TKc"/>
    <property type="match status" value="1"/>
</dbReference>
<dbReference type="SUPFAM" id="SSF56112">
    <property type="entry name" value="Protein kinase-like (PK-like)"/>
    <property type="match status" value="1"/>
</dbReference>
<dbReference type="PROSITE" id="PS00107">
    <property type="entry name" value="PROTEIN_KINASE_ATP"/>
    <property type="match status" value="1"/>
</dbReference>
<dbReference type="PROSITE" id="PS50011">
    <property type="entry name" value="PROTEIN_KINASE_DOM"/>
    <property type="match status" value="1"/>
</dbReference>
<dbReference type="PROSITE" id="PS00108">
    <property type="entry name" value="PROTEIN_KINASE_ST"/>
    <property type="match status" value="1"/>
</dbReference>